<protein>
    <recommendedName>
        <fullName evidence="8">Homer protein homolog 3</fullName>
        <shortName>Homer-3</shortName>
    </recommendedName>
    <alternativeName>
        <fullName>VASP/Ena-related gene up-regulated during seizure and LTP 3</fullName>
        <shortName evidence="7">Vesl-3</shortName>
    </alternativeName>
</protein>
<dbReference type="EMBL" id="AB020879">
    <property type="protein sequence ID" value="BAA35110.2"/>
    <property type="molecule type" value="mRNA"/>
</dbReference>
<dbReference type="RefSeq" id="NP_445762.1">
    <property type="nucleotide sequence ID" value="NM_053310.1"/>
</dbReference>
<dbReference type="RefSeq" id="XP_006252953.1">
    <property type="nucleotide sequence ID" value="XM_006252891.5"/>
</dbReference>
<dbReference type="RefSeq" id="XP_063131342.1">
    <property type="nucleotide sequence ID" value="XM_063275272.1"/>
</dbReference>
<dbReference type="BMRB" id="Q9Z2X5"/>
<dbReference type="SMR" id="Q9Z2X5"/>
<dbReference type="BioGRID" id="248182">
    <property type="interactions" value="5"/>
</dbReference>
<dbReference type="FunCoup" id="Q9Z2X5">
    <property type="interactions" value="536"/>
</dbReference>
<dbReference type="IntAct" id="Q9Z2X5">
    <property type="interactions" value="5"/>
</dbReference>
<dbReference type="MINT" id="Q9Z2X5"/>
<dbReference type="STRING" id="10116.ENSRNOP00000027428"/>
<dbReference type="GlyGen" id="Q9Z2X5">
    <property type="glycosylation" value="1 site"/>
</dbReference>
<dbReference type="iPTMnet" id="Q9Z2X5"/>
<dbReference type="PhosphoSitePlus" id="Q9Z2X5"/>
<dbReference type="PaxDb" id="10116-ENSRNOP00000027428"/>
<dbReference type="GeneID" id="29548"/>
<dbReference type="KEGG" id="rno:29548"/>
<dbReference type="UCSC" id="RGD:620706">
    <property type="organism name" value="rat"/>
</dbReference>
<dbReference type="AGR" id="RGD:620706"/>
<dbReference type="CTD" id="9454"/>
<dbReference type="RGD" id="620706">
    <property type="gene designation" value="Homer3"/>
</dbReference>
<dbReference type="VEuPathDB" id="HostDB:ENSRNOG00000020229"/>
<dbReference type="eggNOG" id="ENOG502R3T0">
    <property type="taxonomic scope" value="Eukaryota"/>
</dbReference>
<dbReference type="HOGENOM" id="CLU_033940_0_0_1"/>
<dbReference type="InParanoid" id="Q9Z2X5"/>
<dbReference type="OrthoDB" id="9983798at2759"/>
<dbReference type="PhylomeDB" id="Q9Z2X5"/>
<dbReference type="TreeFam" id="TF325627"/>
<dbReference type="Reactome" id="R-RNO-6794361">
    <property type="pathway name" value="Neurexins and neuroligins"/>
</dbReference>
<dbReference type="CD-CODE" id="A7E9CBB4">
    <property type="entry name" value="Postsynaptic density"/>
</dbReference>
<dbReference type="PRO" id="PR:Q9Z2X5"/>
<dbReference type="Proteomes" id="UP000002494">
    <property type="component" value="Chromosome 16"/>
</dbReference>
<dbReference type="Bgee" id="ENSRNOG00000020229">
    <property type="expression patterns" value="Expressed in cerebellum and 19 other cell types or tissues"/>
</dbReference>
<dbReference type="ExpressionAtlas" id="Q9Z2X5">
    <property type="expression patterns" value="baseline and differential"/>
</dbReference>
<dbReference type="GO" id="GO:0045178">
    <property type="term" value="C:basal part of cell"/>
    <property type="evidence" value="ECO:0000266"/>
    <property type="project" value="RGD"/>
</dbReference>
<dbReference type="GO" id="GO:0005737">
    <property type="term" value="C:cytoplasm"/>
    <property type="evidence" value="ECO:0000318"/>
    <property type="project" value="GO_Central"/>
</dbReference>
<dbReference type="GO" id="GO:0005829">
    <property type="term" value="C:cytosol"/>
    <property type="evidence" value="ECO:0000266"/>
    <property type="project" value="RGD"/>
</dbReference>
<dbReference type="GO" id="GO:0030425">
    <property type="term" value="C:dendrite"/>
    <property type="evidence" value="ECO:0000318"/>
    <property type="project" value="GO_Central"/>
</dbReference>
<dbReference type="GO" id="GO:0098978">
    <property type="term" value="C:glutamatergic synapse"/>
    <property type="evidence" value="ECO:0000266"/>
    <property type="project" value="RGD"/>
</dbReference>
<dbReference type="GO" id="GO:0005886">
    <property type="term" value="C:plasma membrane"/>
    <property type="evidence" value="ECO:0000318"/>
    <property type="project" value="GO_Central"/>
</dbReference>
<dbReference type="GO" id="GO:0014069">
    <property type="term" value="C:postsynaptic density"/>
    <property type="evidence" value="ECO:0000266"/>
    <property type="project" value="RGD"/>
</dbReference>
<dbReference type="GO" id="GO:0035256">
    <property type="term" value="F:G protein-coupled glutamate receptor binding"/>
    <property type="evidence" value="ECO:0000318"/>
    <property type="project" value="GO_Central"/>
</dbReference>
<dbReference type="GO" id="GO:0042802">
    <property type="term" value="F:identical protein binding"/>
    <property type="evidence" value="ECO:0000266"/>
    <property type="project" value="RGD"/>
</dbReference>
<dbReference type="GO" id="GO:0019904">
    <property type="term" value="F:protein domain specific binding"/>
    <property type="evidence" value="ECO:0000266"/>
    <property type="project" value="RGD"/>
</dbReference>
<dbReference type="GO" id="GO:0007216">
    <property type="term" value="P:G protein-coupled glutamate receptor signaling pathway"/>
    <property type="evidence" value="ECO:0000318"/>
    <property type="project" value="GO_Central"/>
</dbReference>
<dbReference type="GO" id="GO:0070885">
    <property type="term" value="P:negative regulation of calcineurin-NFAT signaling cascade"/>
    <property type="evidence" value="ECO:0000250"/>
    <property type="project" value="UniProtKB"/>
</dbReference>
<dbReference type="GO" id="GO:0032703">
    <property type="term" value="P:negative regulation of interleukin-2 production"/>
    <property type="evidence" value="ECO:0000250"/>
    <property type="project" value="UniProtKB"/>
</dbReference>
<dbReference type="GO" id="GO:2001256">
    <property type="term" value="P:regulation of store-operated calcium entry"/>
    <property type="evidence" value="ECO:0000318"/>
    <property type="project" value="GO_Central"/>
</dbReference>
<dbReference type="CDD" id="cd01206">
    <property type="entry name" value="EVH1_Homer_Vesl"/>
    <property type="match status" value="1"/>
</dbReference>
<dbReference type="FunFam" id="2.30.29.30:FF:000014">
    <property type="entry name" value="Homer homolog 1 (Drosophila)"/>
    <property type="match status" value="1"/>
</dbReference>
<dbReference type="FunFam" id="1.20.5.1700:FF:000005">
    <property type="entry name" value="homer protein homolog 3 isoform X1"/>
    <property type="match status" value="1"/>
</dbReference>
<dbReference type="Gene3D" id="1.20.5.1700">
    <property type="match status" value="1"/>
</dbReference>
<dbReference type="Gene3D" id="2.30.29.30">
    <property type="entry name" value="Pleckstrin-homology domain (PH domain)/Phosphotyrosine-binding domain (PTB)"/>
    <property type="match status" value="1"/>
</dbReference>
<dbReference type="InterPro" id="IPR045027">
    <property type="entry name" value="Homer"/>
</dbReference>
<dbReference type="InterPro" id="IPR044100">
    <property type="entry name" value="Homer_EVH1"/>
</dbReference>
<dbReference type="InterPro" id="IPR011993">
    <property type="entry name" value="PH-like_dom_sf"/>
</dbReference>
<dbReference type="InterPro" id="IPR000697">
    <property type="entry name" value="WH1/EVH1_dom"/>
</dbReference>
<dbReference type="PANTHER" id="PTHR10918">
    <property type="entry name" value="HOMER"/>
    <property type="match status" value="1"/>
</dbReference>
<dbReference type="Pfam" id="PF00568">
    <property type="entry name" value="WH1"/>
    <property type="match status" value="1"/>
</dbReference>
<dbReference type="SMART" id="SM00461">
    <property type="entry name" value="WH1"/>
    <property type="match status" value="1"/>
</dbReference>
<dbReference type="SUPFAM" id="SSF50729">
    <property type="entry name" value="PH domain-like"/>
    <property type="match status" value="1"/>
</dbReference>
<dbReference type="PROSITE" id="PS50229">
    <property type="entry name" value="WH1"/>
    <property type="match status" value="1"/>
</dbReference>
<evidence type="ECO:0000250" key="1"/>
<evidence type="ECO:0000250" key="2">
    <source>
        <dbReference type="UniProtKB" id="Q99JP6"/>
    </source>
</evidence>
<evidence type="ECO:0000250" key="3">
    <source>
        <dbReference type="UniProtKB" id="Q9NSC5"/>
    </source>
</evidence>
<evidence type="ECO:0000255" key="4"/>
<evidence type="ECO:0000255" key="5">
    <source>
        <dbReference type="PROSITE-ProRule" id="PRU00410"/>
    </source>
</evidence>
<evidence type="ECO:0000256" key="6">
    <source>
        <dbReference type="SAM" id="MobiDB-lite"/>
    </source>
</evidence>
<evidence type="ECO:0000303" key="7">
    <source ref="1"/>
</evidence>
<evidence type="ECO:0000305" key="8"/>
<evidence type="ECO:0000312" key="9">
    <source>
        <dbReference type="RGD" id="620706"/>
    </source>
</evidence>
<evidence type="ECO:0007744" key="10">
    <source>
    </source>
</evidence>
<proteinExistence type="evidence at protein level"/>
<organism>
    <name type="scientific">Rattus norvegicus</name>
    <name type="common">Rat</name>
    <dbReference type="NCBI Taxonomy" id="10116"/>
    <lineage>
        <taxon>Eukaryota</taxon>
        <taxon>Metazoa</taxon>
        <taxon>Chordata</taxon>
        <taxon>Craniata</taxon>
        <taxon>Vertebrata</taxon>
        <taxon>Euteleostomi</taxon>
        <taxon>Mammalia</taxon>
        <taxon>Eutheria</taxon>
        <taxon>Euarchontoglires</taxon>
        <taxon>Glires</taxon>
        <taxon>Rodentia</taxon>
        <taxon>Myomorpha</taxon>
        <taxon>Muroidea</taxon>
        <taxon>Muridae</taxon>
        <taxon>Murinae</taxon>
        <taxon>Rattus</taxon>
    </lineage>
</organism>
<accession>Q9Z2X5</accession>
<name>HOME3_RAT</name>
<keyword id="KW-0175">Coiled coil</keyword>
<keyword id="KW-0963">Cytoplasm</keyword>
<keyword id="KW-0597">Phosphoprotein</keyword>
<keyword id="KW-1185">Reference proteome</keyword>
<keyword id="KW-0770">Synapse</keyword>
<comment type="function">
    <text evidence="1 2 3">Postsynaptic density scaffolding protein. Binds and cross-links cytoplasmic regions of GRM1, GRM5, ITPR1, DNM3, RYR1, RYR2, SHANK1 and SHANK3. By physically linking GRM1 and GRM5 with ER-associated ITPR1 receptors, it aids the coupling of surface receptors to intracellular calcium release (By similarity). Negatively regulates T cell activation by inhibiting the calcineurin-NFAT pathway. Acts by competing with calcineurin/PPP3CA for NFAT protein binding, hence preventing NFAT activation by PPP3CA (By similarity).</text>
</comment>
<comment type="subunit">
    <text evidence="1 3">Tetramer (By similarity). Encodes coiled-coil structures that mediate homo- and heteromultimerization. Interacts with NFATC2; interaction is calcium independent; interaction competes with PPP3CA for NFATC2 binding; interaction is reduced by AKT activation. Interacts with NFATC1 and NFATC4. Interacts with SHANK1; forms a high-order complex at least composed of SHANK1 and HOMER3; the complex formation is regulated by CAMK2A-mediated phosphorylation (By similarity).</text>
</comment>
<comment type="subcellular location">
    <subcellularLocation>
        <location evidence="1">Cytoplasm</location>
    </subcellularLocation>
    <subcellularLocation>
        <location evidence="1">Postsynaptic density</location>
    </subcellularLocation>
    <subcellularLocation>
        <location evidence="1">Synapse</location>
    </subcellularLocation>
    <text evidence="1">Postsynaptic density of neuronal cells.</text>
</comment>
<comment type="domain">
    <text>The WH1 domain interacts with the PPXXF motif in GRM1, GRM5, RYR1, RYR2, ITPR1, SHANK 1 and SHANK3.</text>
</comment>
<comment type="similarity">
    <text evidence="8">Belongs to the Homer family.</text>
</comment>
<sequence>MSTAREQPIFSTRAHVFQIDPATKRNWIPAGKHALTVSYFYDATRNVYRIISIGGAKAIINSTVTPNMTFTKTSQKFGQWADSRANTVYGLGFGSEQQLTQFAEKFQEVKEAARLAREKSQDGGELTSTALAMASHQVPPSPLVSTNGPEEKLFRSQSADAPGPTERERLKKMLSEGSVGEVQWEAEFFALQDSNQRLAGALREANAAATQWRQQLEVQRAEAEHLRQRVAELEAQVAAEPVRAGEKEATSQSVEQLEARVQTKDQEIQTLKNQSTGPREAPDTAEREETQQQVQDLETRNAELEQQLRAMESNLEEARAERERARAEVGRAAQLLDVRLFELSELREGLARLAEAAP</sequence>
<gene>
    <name evidence="9" type="primary">Homer3</name>
    <name type="synonym">Vesl3</name>
</gene>
<reference key="1">
    <citation type="submission" date="1998-12" db="EMBL/GenBank/DDBJ databases">
        <title>Rattus norvegicus mRNA for Vesl-3, complete cds.</title>
        <authorList>
            <person name="Kato A."/>
            <person name="Ageta H."/>
            <person name="Sugiyama H."/>
        </authorList>
    </citation>
    <scope>NUCLEOTIDE SEQUENCE [MRNA]</scope>
    <source>
        <strain>Sprague-Dawley</strain>
        <tissue>Hippocampus</tissue>
    </source>
</reference>
<reference key="2">
    <citation type="journal article" date="2012" name="Nat. Commun.">
        <title>Quantitative maps of protein phosphorylation sites across 14 different rat organs and tissues.</title>
        <authorList>
            <person name="Lundby A."/>
            <person name="Secher A."/>
            <person name="Lage K."/>
            <person name="Nordsborg N.B."/>
            <person name="Dmytriyev A."/>
            <person name="Lundby C."/>
            <person name="Olsen J.V."/>
        </authorList>
    </citation>
    <scope>PHOSPHORYLATION [LARGE SCALE ANALYSIS] AT SER-120 AND SER-158</scope>
    <scope>IDENTIFICATION BY MASS SPECTROMETRY [LARGE SCALE ANALYSIS]</scope>
</reference>
<feature type="chain" id="PRO_0000191013" description="Homer protein homolog 3">
    <location>
        <begin position="1"/>
        <end position="358"/>
    </location>
</feature>
<feature type="domain" description="WH1" evidence="5">
    <location>
        <begin position="1"/>
        <end position="113"/>
    </location>
</feature>
<feature type="region of interest" description="Required for interaction with NFATC2" evidence="3">
    <location>
        <begin position="1"/>
        <end position="80"/>
    </location>
</feature>
<feature type="region of interest" description="Disordered" evidence="6">
    <location>
        <begin position="137"/>
        <end position="168"/>
    </location>
</feature>
<feature type="region of interest" description="Disordered" evidence="6">
    <location>
        <begin position="239"/>
        <end position="296"/>
    </location>
</feature>
<feature type="coiled-coil region" evidence="4">
    <location>
        <begin position="95"/>
        <end position="122"/>
    </location>
</feature>
<feature type="coiled-coil region" evidence="4">
    <location>
        <begin position="190"/>
        <end position="355"/>
    </location>
</feature>
<feature type="compositionally biased region" description="Basic and acidic residues" evidence="6">
    <location>
        <begin position="257"/>
        <end position="267"/>
    </location>
</feature>
<feature type="compositionally biased region" description="Polar residues" evidence="6">
    <location>
        <begin position="268"/>
        <end position="277"/>
    </location>
</feature>
<feature type="compositionally biased region" description="Basic and acidic residues" evidence="6">
    <location>
        <begin position="280"/>
        <end position="290"/>
    </location>
</feature>
<feature type="modified residue" description="Phosphoserine" evidence="10">
    <location>
        <position position="120"/>
    </location>
</feature>
<feature type="modified residue" description="Phosphoserine" evidence="10">
    <location>
        <position position="158"/>
    </location>
</feature>